<sequence>MIQQETRLKVADNSGAREILTIKVLGGSGRKFANIGDVIVASVKQATPGGAVKKGDVVKAVIVRTKTGARRPDGSYIKFDDNAAVIIRDDKTPRGTRIFGPVARELREGGYMKIVSLAPEVL</sequence>
<name>RL14_STRP6</name>
<accession>Q5XEC5</accession>
<proteinExistence type="inferred from homology"/>
<gene>
    <name evidence="1" type="primary">rplN</name>
    <name type="ordered locus">M6_Spy0103</name>
</gene>
<dbReference type="EMBL" id="CP000003">
    <property type="protein sequence ID" value="AAT86238.1"/>
    <property type="molecule type" value="Genomic_DNA"/>
</dbReference>
<dbReference type="RefSeq" id="WP_000615920.1">
    <property type="nucleotide sequence ID" value="NC_006086.1"/>
</dbReference>
<dbReference type="SMR" id="Q5XEC5"/>
<dbReference type="GeneID" id="83689563"/>
<dbReference type="KEGG" id="spa:M6_Spy0103"/>
<dbReference type="HOGENOM" id="CLU_095071_2_1_9"/>
<dbReference type="Proteomes" id="UP000001167">
    <property type="component" value="Chromosome"/>
</dbReference>
<dbReference type="GO" id="GO:0022625">
    <property type="term" value="C:cytosolic large ribosomal subunit"/>
    <property type="evidence" value="ECO:0007669"/>
    <property type="project" value="TreeGrafter"/>
</dbReference>
<dbReference type="GO" id="GO:0070180">
    <property type="term" value="F:large ribosomal subunit rRNA binding"/>
    <property type="evidence" value="ECO:0007669"/>
    <property type="project" value="TreeGrafter"/>
</dbReference>
<dbReference type="GO" id="GO:0003735">
    <property type="term" value="F:structural constituent of ribosome"/>
    <property type="evidence" value="ECO:0007669"/>
    <property type="project" value="InterPro"/>
</dbReference>
<dbReference type="GO" id="GO:0006412">
    <property type="term" value="P:translation"/>
    <property type="evidence" value="ECO:0007669"/>
    <property type="project" value="UniProtKB-UniRule"/>
</dbReference>
<dbReference type="CDD" id="cd00337">
    <property type="entry name" value="Ribosomal_uL14"/>
    <property type="match status" value="1"/>
</dbReference>
<dbReference type="FunFam" id="2.40.150.20:FF:000001">
    <property type="entry name" value="50S ribosomal protein L14"/>
    <property type="match status" value="1"/>
</dbReference>
<dbReference type="Gene3D" id="2.40.150.20">
    <property type="entry name" value="Ribosomal protein L14"/>
    <property type="match status" value="1"/>
</dbReference>
<dbReference type="HAMAP" id="MF_01367">
    <property type="entry name" value="Ribosomal_uL14"/>
    <property type="match status" value="1"/>
</dbReference>
<dbReference type="InterPro" id="IPR000218">
    <property type="entry name" value="Ribosomal_uL14"/>
</dbReference>
<dbReference type="InterPro" id="IPR005745">
    <property type="entry name" value="Ribosomal_uL14_bac-type"/>
</dbReference>
<dbReference type="InterPro" id="IPR019972">
    <property type="entry name" value="Ribosomal_uL14_CS"/>
</dbReference>
<dbReference type="InterPro" id="IPR036853">
    <property type="entry name" value="Ribosomal_uL14_sf"/>
</dbReference>
<dbReference type="NCBIfam" id="TIGR01067">
    <property type="entry name" value="rplN_bact"/>
    <property type="match status" value="1"/>
</dbReference>
<dbReference type="PANTHER" id="PTHR11761">
    <property type="entry name" value="50S/60S RIBOSOMAL PROTEIN L14/L23"/>
    <property type="match status" value="1"/>
</dbReference>
<dbReference type="PANTHER" id="PTHR11761:SF3">
    <property type="entry name" value="LARGE RIBOSOMAL SUBUNIT PROTEIN UL14M"/>
    <property type="match status" value="1"/>
</dbReference>
<dbReference type="Pfam" id="PF00238">
    <property type="entry name" value="Ribosomal_L14"/>
    <property type="match status" value="1"/>
</dbReference>
<dbReference type="SMART" id="SM01374">
    <property type="entry name" value="Ribosomal_L14"/>
    <property type="match status" value="1"/>
</dbReference>
<dbReference type="SUPFAM" id="SSF50193">
    <property type="entry name" value="Ribosomal protein L14"/>
    <property type="match status" value="1"/>
</dbReference>
<dbReference type="PROSITE" id="PS00049">
    <property type="entry name" value="RIBOSOMAL_L14"/>
    <property type="match status" value="1"/>
</dbReference>
<reference key="1">
    <citation type="journal article" date="2004" name="J. Infect. Dis.">
        <title>Progress toward characterization of the group A Streptococcus metagenome: complete genome sequence of a macrolide-resistant serotype M6 strain.</title>
        <authorList>
            <person name="Banks D.J."/>
            <person name="Porcella S.F."/>
            <person name="Barbian K.D."/>
            <person name="Beres S.B."/>
            <person name="Philips L.E."/>
            <person name="Voyich J.M."/>
            <person name="DeLeo F.R."/>
            <person name="Martin J.M."/>
            <person name="Somerville G.A."/>
            <person name="Musser J.M."/>
        </authorList>
    </citation>
    <scope>NUCLEOTIDE SEQUENCE [LARGE SCALE GENOMIC DNA]</scope>
    <source>
        <strain>ATCC BAA-946 / MGAS10394</strain>
    </source>
</reference>
<comment type="function">
    <text evidence="1">Binds to 23S rRNA. Forms part of two intersubunit bridges in the 70S ribosome.</text>
</comment>
<comment type="subunit">
    <text evidence="1">Part of the 50S ribosomal subunit. Forms a cluster with proteins L3 and L19. In the 70S ribosome, L14 and L19 interact and together make contacts with the 16S rRNA in bridges B5 and B8.</text>
</comment>
<comment type="similarity">
    <text evidence="1">Belongs to the universal ribosomal protein uL14 family.</text>
</comment>
<feature type="chain" id="PRO_1000055717" description="Large ribosomal subunit protein uL14">
    <location>
        <begin position="1"/>
        <end position="122"/>
    </location>
</feature>
<keyword id="KW-0687">Ribonucleoprotein</keyword>
<keyword id="KW-0689">Ribosomal protein</keyword>
<keyword id="KW-0694">RNA-binding</keyword>
<keyword id="KW-0699">rRNA-binding</keyword>
<organism>
    <name type="scientific">Streptococcus pyogenes serotype M6 (strain ATCC BAA-946 / MGAS10394)</name>
    <dbReference type="NCBI Taxonomy" id="286636"/>
    <lineage>
        <taxon>Bacteria</taxon>
        <taxon>Bacillati</taxon>
        <taxon>Bacillota</taxon>
        <taxon>Bacilli</taxon>
        <taxon>Lactobacillales</taxon>
        <taxon>Streptococcaceae</taxon>
        <taxon>Streptococcus</taxon>
    </lineage>
</organism>
<evidence type="ECO:0000255" key="1">
    <source>
        <dbReference type="HAMAP-Rule" id="MF_01367"/>
    </source>
</evidence>
<evidence type="ECO:0000305" key="2"/>
<protein>
    <recommendedName>
        <fullName evidence="1">Large ribosomal subunit protein uL14</fullName>
    </recommendedName>
    <alternativeName>
        <fullName evidence="2">50S ribosomal protein L14</fullName>
    </alternativeName>
</protein>